<protein>
    <recommendedName>
        <fullName>Uncharacterized membrane protein YJR124C</fullName>
    </recommendedName>
</protein>
<name>YJ94_YEAST</name>
<reference key="1">
    <citation type="journal article" date="1996" name="EMBO J.">
        <title>Complete nucleotide sequence of Saccharomyces cerevisiae chromosome X.</title>
        <authorList>
            <person name="Galibert F."/>
            <person name="Alexandraki D."/>
            <person name="Baur A."/>
            <person name="Boles E."/>
            <person name="Chalwatzis N."/>
            <person name="Chuat J.-C."/>
            <person name="Coster F."/>
            <person name="Cziepluch C."/>
            <person name="de Haan M."/>
            <person name="Domdey H."/>
            <person name="Durand P."/>
            <person name="Entian K.-D."/>
            <person name="Gatius M."/>
            <person name="Goffeau A."/>
            <person name="Grivell L.A."/>
            <person name="Hennemann A."/>
            <person name="Herbert C.J."/>
            <person name="Heumann K."/>
            <person name="Hilger F."/>
            <person name="Hollenberg C.P."/>
            <person name="Huang M.-E."/>
            <person name="Jacq C."/>
            <person name="Jauniaux J.-C."/>
            <person name="Katsoulou C."/>
            <person name="Kirchrath L."/>
            <person name="Kleine K."/>
            <person name="Kordes E."/>
            <person name="Koetter P."/>
            <person name="Liebl S."/>
            <person name="Louis E.J."/>
            <person name="Manus V."/>
            <person name="Mewes H.-W."/>
            <person name="Miosga T."/>
            <person name="Obermaier B."/>
            <person name="Perea J."/>
            <person name="Pohl T.M."/>
            <person name="Portetelle D."/>
            <person name="Pujol A."/>
            <person name="Purnelle B."/>
            <person name="Ramezani Rad M."/>
            <person name="Rasmussen S.W."/>
            <person name="Rose M."/>
            <person name="Rossau R."/>
            <person name="Schaaff-Gerstenschlaeger I."/>
            <person name="Smits P.H.M."/>
            <person name="Scarcez T."/>
            <person name="Soriano N."/>
            <person name="To Van D."/>
            <person name="Tzermia M."/>
            <person name="Van Broekhoven A."/>
            <person name="Vandenbol M."/>
            <person name="Wedler H."/>
            <person name="von Wettstein D."/>
            <person name="Wambutt R."/>
            <person name="Zagulski M."/>
            <person name="Zollner A."/>
            <person name="Karpfinger-Hartl L."/>
        </authorList>
    </citation>
    <scope>NUCLEOTIDE SEQUENCE [LARGE SCALE GENOMIC DNA]</scope>
    <source>
        <strain>ATCC 204508 / S288c</strain>
    </source>
</reference>
<reference key="2">
    <citation type="journal article" date="2014" name="G3 (Bethesda)">
        <title>The reference genome sequence of Saccharomyces cerevisiae: Then and now.</title>
        <authorList>
            <person name="Engel S.R."/>
            <person name="Dietrich F.S."/>
            <person name="Fisk D.G."/>
            <person name="Binkley G."/>
            <person name="Balakrishnan R."/>
            <person name="Costanzo M.C."/>
            <person name="Dwight S.S."/>
            <person name="Hitz B.C."/>
            <person name="Karra K."/>
            <person name="Nash R.S."/>
            <person name="Weng S."/>
            <person name="Wong E.D."/>
            <person name="Lloyd P."/>
            <person name="Skrzypek M.S."/>
            <person name="Miyasato S.R."/>
            <person name="Simison M."/>
            <person name="Cherry J.M."/>
        </authorList>
    </citation>
    <scope>GENOME REANNOTATION</scope>
    <source>
        <strain>ATCC 204508 / S288c</strain>
    </source>
</reference>
<reference key="3">
    <citation type="journal article" date="2007" name="Genome Res.">
        <title>Approaching a complete repository of sequence-verified protein-encoding clones for Saccharomyces cerevisiae.</title>
        <authorList>
            <person name="Hu Y."/>
            <person name="Rolfs A."/>
            <person name="Bhullar B."/>
            <person name="Murthy T.V.S."/>
            <person name="Zhu C."/>
            <person name="Berger M.F."/>
            <person name="Camargo A.A."/>
            <person name="Kelley F."/>
            <person name="McCarron S."/>
            <person name="Jepson D."/>
            <person name="Richardson A."/>
            <person name="Raphael J."/>
            <person name="Moreira D."/>
            <person name="Taycher E."/>
            <person name="Zuo D."/>
            <person name="Mohr S."/>
            <person name="Kane M.F."/>
            <person name="Williamson J."/>
            <person name="Simpson A.J.G."/>
            <person name="Bulyk M.L."/>
            <person name="Harlow E."/>
            <person name="Marsischky G."/>
            <person name="Kolodner R.D."/>
            <person name="LaBaer J."/>
        </authorList>
    </citation>
    <scope>NUCLEOTIDE SEQUENCE [GENOMIC DNA]</scope>
    <source>
        <strain>ATCC 204508 / S288c</strain>
    </source>
</reference>
<reference key="4">
    <citation type="journal article" date="2006" name="Proc. Natl. Acad. Sci. U.S.A.">
        <title>A global topology map of the Saccharomyces cerevisiae membrane proteome.</title>
        <authorList>
            <person name="Kim H."/>
            <person name="Melen K."/>
            <person name="Oesterberg M."/>
            <person name="von Heijne G."/>
        </authorList>
    </citation>
    <scope>TOPOLOGY [LARGE SCALE ANALYSIS]</scope>
    <source>
        <strain>ATCC 208353 / W303-1A</strain>
    </source>
</reference>
<proteinExistence type="evidence at protein level"/>
<comment type="subcellular location">
    <subcellularLocation>
        <location>Membrane</location>
        <topology>Multi-pass membrane protein</topology>
    </subcellularLocation>
</comment>
<sequence>MAPEIFVKFKCASRDIKLLWASVFLRLLSYGLTNQVLTLFLNAINMTEDKIGLFMSLTLAGDVICSYILTWYADSWGRRRVLVYGCAMMLLSGLVFSFSENFTLLLVFAIFGVISPSSDEVGPFKSIEEAMIAHLSPHNARPEIYAIHALVGTIGSALGAIICGIFVDLLKRTGLAATDLQCYKLVFLLYAFFAFCKMVIMLLLSDATELDGHYEHTDCNEETAEPLDVNDETAPLMRQATHPEERSNKLSKETVSVLMKLLVIFMVDSLGSGFMTSGWMVYYYSKQFLMGSLALGTLFFITQLVMASSTIPSSIIARCFGPVRATLLVQIPSGIFSILIPMAKNYLPLSILFLNLHFATTAMDVTPRQILLTNIIKPRDLTKVMGVVNIGKTFARCVGPIFTGILANNNYLWLCYIISGSLVITADLILACMFLGVDAKIKKQMNRH</sequence>
<feature type="chain" id="PRO_0000203118" description="Uncharacterized membrane protein YJR124C">
    <location>
        <begin position="1"/>
        <end position="448"/>
    </location>
</feature>
<feature type="topological domain" description="Extracellular" evidence="1">
    <location>
        <begin position="1"/>
        <end position="50"/>
    </location>
</feature>
<feature type="transmembrane region" description="Helical" evidence="1">
    <location>
        <begin position="51"/>
        <end position="71"/>
    </location>
</feature>
<feature type="topological domain" description="Cytoplasmic" evidence="1">
    <location>
        <begin position="72"/>
        <end position="93"/>
    </location>
</feature>
<feature type="transmembrane region" description="Helical" evidence="1">
    <location>
        <begin position="94"/>
        <end position="114"/>
    </location>
</feature>
<feature type="topological domain" description="Extracellular" evidence="1">
    <location>
        <begin position="115"/>
        <end position="146"/>
    </location>
</feature>
<feature type="transmembrane region" description="Helical" evidence="1">
    <location>
        <begin position="147"/>
        <end position="167"/>
    </location>
</feature>
<feature type="topological domain" description="Cytoplasmic" evidence="1">
    <location>
        <begin position="168"/>
        <end position="184"/>
    </location>
</feature>
<feature type="transmembrane region" description="Helical" evidence="1">
    <location>
        <begin position="185"/>
        <end position="205"/>
    </location>
</feature>
<feature type="topological domain" description="Extracellular" evidence="1">
    <location>
        <begin position="206"/>
        <end position="260"/>
    </location>
</feature>
<feature type="transmembrane region" description="Helical" evidence="1">
    <location>
        <begin position="261"/>
        <end position="281"/>
    </location>
</feature>
<feature type="topological domain" description="Cytoplasmic" evidence="1">
    <location>
        <begin position="282"/>
        <end position="287"/>
    </location>
</feature>
<feature type="transmembrane region" description="Helical" evidence="1">
    <location>
        <begin position="288"/>
        <end position="308"/>
    </location>
</feature>
<feature type="topological domain" description="Extracellular" evidence="1">
    <location>
        <begin position="309"/>
        <end position="333"/>
    </location>
</feature>
<feature type="transmembrane region" description="Helical" evidence="1">
    <location>
        <begin position="334"/>
        <end position="354"/>
    </location>
</feature>
<feature type="topological domain" description="Cytoplasmic" evidence="1">
    <location>
        <begin position="355"/>
        <end position="386"/>
    </location>
</feature>
<feature type="transmembrane region" description="Helical" evidence="1">
    <location>
        <begin position="387"/>
        <end position="407"/>
    </location>
</feature>
<feature type="topological domain" description="Extracellular" evidence="1">
    <location>
        <begin position="408"/>
        <end position="416"/>
    </location>
</feature>
<feature type="transmembrane region" description="Helical" evidence="1">
    <location>
        <begin position="417"/>
        <end position="437"/>
    </location>
</feature>
<feature type="topological domain" description="Cytoplasmic" evidence="1">
    <location>
        <begin position="438"/>
        <end position="448"/>
    </location>
</feature>
<feature type="binding site" evidence="1">
    <location>
        <begin position="386"/>
        <end position="393"/>
    </location>
    <ligand>
        <name>ATP</name>
        <dbReference type="ChEBI" id="CHEBI:30616"/>
    </ligand>
</feature>
<feature type="sequence conflict" description="In Ref. 3; AAS56250." evidence="2" ref="3">
    <original>H</original>
    <variation>R</variation>
    <location>
        <position position="448"/>
    </location>
</feature>
<organism>
    <name type="scientific">Saccharomyces cerevisiae (strain ATCC 204508 / S288c)</name>
    <name type="common">Baker's yeast</name>
    <dbReference type="NCBI Taxonomy" id="559292"/>
    <lineage>
        <taxon>Eukaryota</taxon>
        <taxon>Fungi</taxon>
        <taxon>Dikarya</taxon>
        <taxon>Ascomycota</taxon>
        <taxon>Saccharomycotina</taxon>
        <taxon>Saccharomycetes</taxon>
        <taxon>Saccharomycetales</taxon>
        <taxon>Saccharomycetaceae</taxon>
        <taxon>Saccharomyces</taxon>
    </lineage>
</organism>
<dbReference type="EMBL" id="Z49624">
    <property type="protein sequence ID" value="CAA89655.1"/>
    <property type="molecule type" value="Genomic_DNA"/>
</dbReference>
<dbReference type="EMBL" id="AY557924">
    <property type="protein sequence ID" value="AAS56250.1"/>
    <property type="molecule type" value="Genomic_DNA"/>
</dbReference>
<dbReference type="EMBL" id="BK006943">
    <property type="protein sequence ID" value="DAA08909.1"/>
    <property type="molecule type" value="Genomic_DNA"/>
</dbReference>
<dbReference type="PIR" id="S57147">
    <property type="entry name" value="S57147"/>
</dbReference>
<dbReference type="RefSeq" id="NP_012658.3">
    <property type="nucleotide sequence ID" value="NM_001181782.3"/>
</dbReference>
<dbReference type="SMR" id="P47159"/>
<dbReference type="BioGRID" id="33880">
    <property type="interactions" value="51"/>
</dbReference>
<dbReference type="DIP" id="DIP-7198N"/>
<dbReference type="FunCoup" id="P47159">
    <property type="interactions" value="207"/>
</dbReference>
<dbReference type="MINT" id="P47159"/>
<dbReference type="STRING" id="4932.YJR124C"/>
<dbReference type="TCDB" id="2.A.1.63.4">
    <property type="family name" value="the major facilitator superfamily (mfs)"/>
</dbReference>
<dbReference type="iPTMnet" id="P47159"/>
<dbReference type="PaxDb" id="4932-YJR124C"/>
<dbReference type="PeptideAtlas" id="P47159"/>
<dbReference type="EnsemblFungi" id="YJR124C_mRNA">
    <property type="protein sequence ID" value="YJR124C"/>
    <property type="gene ID" value="YJR124C"/>
</dbReference>
<dbReference type="GeneID" id="853588"/>
<dbReference type="KEGG" id="sce:YJR124C"/>
<dbReference type="AGR" id="SGD:S000003885"/>
<dbReference type="SGD" id="S000003885">
    <property type="gene designation" value="YJR124C"/>
</dbReference>
<dbReference type="VEuPathDB" id="FungiDB:YJR124C"/>
<dbReference type="eggNOG" id="ENOG502QTZH">
    <property type="taxonomic scope" value="Eukaryota"/>
</dbReference>
<dbReference type="HOGENOM" id="CLU_025894_2_0_1"/>
<dbReference type="InParanoid" id="P47159"/>
<dbReference type="OMA" id="LGYGFMP"/>
<dbReference type="OrthoDB" id="10027823at2759"/>
<dbReference type="BioCyc" id="YEAST:G3O-31745-MONOMER"/>
<dbReference type="BioGRID-ORCS" id="853588">
    <property type="hits" value="0 hits in 10 CRISPR screens"/>
</dbReference>
<dbReference type="PRO" id="PR:P47159"/>
<dbReference type="Proteomes" id="UP000002311">
    <property type="component" value="Chromosome X"/>
</dbReference>
<dbReference type="RNAct" id="P47159">
    <property type="molecule type" value="protein"/>
</dbReference>
<dbReference type="GO" id="GO:0000329">
    <property type="term" value="C:fungal-type vacuole membrane"/>
    <property type="evidence" value="ECO:0007005"/>
    <property type="project" value="SGD"/>
</dbReference>
<dbReference type="GO" id="GO:0005524">
    <property type="term" value="F:ATP binding"/>
    <property type="evidence" value="ECO:0007669"/>
    <property type="project" value="UniProtKB-KW"/>
</dbReference>
<dbReference type="GO" id="GO:0022857">
    <property type="term" value="F:transmembrane transporter activity"/>
    <property type="evidence" value="ECO:0007669"/>
    <property type="project" value="InterPro"/>
</dbReference>
<dbReference type="Gene3D" id="1.20.1250.20">
    <property type="entry name" value="MFS general substrate transporter like domains"/>
    <property type="match status" value="1"/>
</dbReference>
<dbReference type="InterPro" id="IPR011701">
    <property type="entry name" value="MFS"/>
</dbReference>
<dbReference type="InterPro" id="IPR020846">
    <property type="entry name" value="MFS_dom"/>
</dbReference>
<dbReference type="InterPro" id="IPR036259">
    <property type="entry name" value="MFS_trans_sf"/>
</dbReference>
<dbReference type="PANTHER" id="PTHR23520:SF2">
    <property type="entry name" value="ABR173CP"/>
    <property type="match status" value="1"/>
</dbReference>
<dbReference type="PANTHER" id="PTHR23520">
    <property type="entry name" value="TRANSPORTER, PUTATIVE (AFU_ORTHOLOGUE AFUA_3G04000)-RELATED"/>
    <property type="match status" value="1"/>
</dbReference>
<dbReference type="Pfam" id="PF07690">
    <property type="entry name" value="MFS_1"/>
    <property type="match status" value="2"/>
</dbReference>
<dbReference type="SUPFAM" id="SSF103473">
    <property type="entry name" value="MFS general substrate transporter"/>
    <property type="match status" value="1"/>
</dbReference>
<dbReference type="PROSITE" id="PS50850">
    <property type="entry name" value="MFS"/>
    <property type="match status" value="1"/>
</dbReference>
<accession>P47159</accession>
<accession>D6VWU3</accession>
<accession>Q6Q5M7</accession>
<evidence type="ECO:0000255" key="1"/>
<evidence type="ECO:0000305" key="2"/>
<keyword id="KW-0067">ATP-binding</keyword>
<keyword id="KW-0472">Membrane</keyword>
<keyword id="KW-0547">Nucleotide-binding</keyword>
<keyword id="KW-1185">Reference proteome</keyword>
<keyword id="KW-0812">Transmembrane</keyword>
<keyword id="KW-1133">Transmembrane helix</keyword>
<gene>
    <name type="ordered locus">YJR124C</name>
    <name type="ORF">J2046</name>
</gene>